<proteinExistence type="evidence at protein level"/>
<accession>P0C0S9</accession>
<accession>A5PJH1</accession>
<accession>P02261</accession>
<dbReference type="EMBL" id="BC142109">
    <property type="protein sequence ID" value="AAI42110.1"/>
    <property type="molecule type" value="mRNA"/>
</dbReference>
<dbReference type="PIR" id="A91216">
    <property type="entry name" value="HSBO2A"/>
</dbReference>
<dbReference type="RefSeq" id="NP_001092190.1">
    <property type="nucleotide sequence ID" value="NM_001098720.2"/>
</dbReference>
<dbReference type="RefSeq" id="XP_002697551.1">
    <property type="nucleotide sequence ID" value="XM_002697505.6"/>
</dbReference>
<dbReference type="RefSeq" id="XP_005196697.1">
    <property type="nucleotide sequence ID" value="XM_005196640.2"/>
</dbReference>
<dbReference type="RefSeq" id="XP_005223785.1">
    <property type="nucleotide sequence ID" value="XM_005223728.4"/>
</dbReference>
<dbReference type="RefSeq" id="XP_010816763.1">
    <property type="nucleotide sequence ID" value="XM_010818461.4"/>
</dbReference>
<dbReference type="RefSeq" id="XP_010816815.1">
    <property type="nucleotide sequence ID" value="XM_010818513.4"/>
</dbReference>
<dbReference type="RefSeq" id="XP_010823700.1">
    <property type="nucleotide sequence ID" value="XM_010825398.2"/>
</dbReference>
<dbReference type="RefSeq" id="XP_010823710.1">
    <property type="nucleotide sequence ID" value="XM_010825408.2"/>
</dbReference>
<dbReference type="RefSeq" id="XP_059736715.1">
    <property type="nucleotide sequence ID" value="XM_059880732.1"/>
</dbReference>
<dbReference type="RefSeq" id="XP_876240.1">
    <property type="nucleotide sequence ID" value="XM_871147.5"/>
</dbReference>
<dbReference type="PDB" id="6FML">
    <property type="method" value="EM"/>
    <property type="resolution" value="4.34 A"/>
    <property type="chains" value="O/S=2-130"/>
</dbReference>
<dbReference type="PDBsum" id="6FML"/>
<dbReference type="EMDB" id="EMD-4277"/>
<dbReference type="SMR" id="P0C0S9"/>
<dbReference type="FunCoup" id="P0C0S9">
    <property type="interactions" value="1302"/>
</dbReference>
<dbReference type="IntAct" id="P0C0S9">
    <property type="interactions" value="1"/>
</dbReference>
<dbReference type="MINT" id="P0C0S9"/>
<dbReference type="STRING" id="9913.ENSBTAP00000014123"/>
<dbReference type="iPTMnet" id="P0C0S9"/>
<dbReference type="PaxDb" id="9913-ENSBTAP00000014123"/>
<dbReference type="PeptideAtlas" id="P0C0S9"/>
<dbReference type="Ensembl" id="ENSBTAT00000122325.1">
    <property type="protein sequence ID" value="ENSBTAP00000082513.1"/>
    <property type="gene ID" value="ENSBTAG00000059340.1"/>
</dbReference>
<dbReference type="GeneID" id="104968446"/>
<dbReference type="GeneID" id="104975683"/>
<dbReference type="GeneID" id="529277"/>
<dbReference type="GeneID" id="616611"/>
<dbReference type="GeneID" id="616790"/>
<dbReference type="GeneID" id="618824"/>
<dbReference type="KEGG" id="bta:104968446"/>
<dbReference type="KEGG" id="bta:104975683"/>
<dbReference type="KEGG" id="bta:529277"/>
<dbReference type="KEGG" id="bta:616790"/>
<dbReference type="KEGG" id="bta:618824"/>
<dbReference type="CTD" id="3013"/>
<dbReference type="CTD" id="319173"/>
<dbReference type="CTD" id="8331"/>
<dbReference type="CTD" id="8332"/>
<dbReference type="CTD" id="8336"/>
<dbReference type="VEuPathDB" id="HostDB:ENSBTAG00000048599"/>
<dbReference type="VEuPathDB" id="HostDB:ENSBTAG00000051969"/>
<dbReference type="VEuPathDB" id="HostDB:ENSBTAG00000053792"/>
<dbReference type="eggNOG" id="KOG1756">
    <property type="taxonomic scope" value="Eukaryota"/>
</dbReference>
<dbReference type="GeneTree" id="ENSGT00940000153125"/>
<dbReference type="HOGENOM" id="CLU_062828_3_1_1"/>
<dbReference type="InParanoid" id="P0C0S9"/>
<dbReference type="OMA" id="KSDHRAG"/>
<dbReference type="OrthoDB" id="9710282at2759"/>
<dbReference type="TreeFam" id="TF300137"/>
<dbReference type="Reactome" id="R-BTA-3214815">
    <property type="pathway name" value="HDACs deacetylate histones"/>
</dbReference>
<dbReference type="Reactome" id="R-BTA-3214847">
    <property type="pathway name" value="HATs acetylate histones"/>
</dbReference>
<dbReference type="Reactome" id="R-BTA-3214858">
    <property type="pathway name" value="RMTs methylate histone arginines"/>
</dbReference>
<dbReference type="Reactome" id="R-BTA-5689603">
    <property type="pathway name" value="UCH proteinases"/>
</dbReference>
<dbReference type="Reactome" id="R-BTA-5689880">
    <property type="pathway name" value="Ub-specific processing proteases"/>
</dbReference>
<dbReference type="Reactome" id="R-BTA-5689901">
    <property type="pathway name" value="Metalloprotease DUBs"/>
</dbReference>
<dbReference type="Proteomes" id="UP000009136">
    <property type="component" value="Chromosome 23"/>
</dbReference>
<dbReference type="Bgee" id="ENSBTAG00000048599">
    <property type="expression patterns" value="Expressed in spiral colon and 51 other cell types or tissues"/>
</dbReference>
<dbReference type="GO" id="GO:0000786">
    <property type="term" value="C:nucleosome"/>
    <property type="evidence" value="ECO:0000318"/>
    <property type="project" value="GO_Central"/>
</dbReference>
<dbReference type="GO" id="GO:0005634">
    <property type="term" value="C:nucleus"/>
    <property type="evidence" value="ECO:0000318"/>
    <property type="project" value="GO_Central"/>
</dbReference>
<dbReference type="GO" id="GO:0003677">
    <property type="term" value="F:DNA binding"/>
    <property type="evidence" value="ECO:0007669"/>
    <property type="project" value="UniProtKB-KW"/>
</dbReference>
<dbReference type="GO" id="GO:0046982">
    <property type="term" value="F:protein heterodimerization activity"/>
    <property type="evidence" value="ECO:0007669"/>
    <property type="project" value="InterPro"/>
</dbReference>
<dbReference type="GO" id="GO:0030527">
    <property type="term" value="F:structural constituent of chromatin"/>
    <property type="evidence" value="ECO:0000318"/>
    <property type="project" value="GO_Central"/>
</dbReference>
<dbReference type="GO" id="GO:0031507">
    <property type="term" value="P:heterochromatin formation"/>
    <property type="evidence" value="ECO:0000318"/>
    <property type="project" value="GO_Central"/>
</dbReference>
<dbReference type="CDD" id="cd00074">
    <property type="entry name" value="HFD_H2A"/>
    <property type="match status" value="1"/>
</dbReference>
<dbReference type="FunFam" id="1.10.20.10:FF:000103">
    <property type="entry name" value="Histone H2A type 1"/>
    <property type="match status" value="1"/>
</dbReference>
<dbReference type="Gene3D" id="1.10.20.10">
    <property type="entry name" value="Histone, subunit A"/>
    <property type="match status" value="1"/>
</dbReference>
<dbReference type="InterPro" id="IPR009072">
    <property type="entry name" value="Histone-fold"/>
</dbReference>
<dbReference type="InterPro" id="IPR002119">
    <property type="entry name" value="Histone_H2A"/>
</dbReference>
<dbReference type="InterPro" id="IPR007125">
    <property type="entry name" value="Histone_H2A/H2B/H3"/>
</dbReference>
<dbReference type="InterPro" id="IPR032454">
    <property type="entry name" value="Histone_H2A_C"/>
</dbReference>
<dbReference type="InterPro" id="IPR032458">
    <property type="entry name" value="Histone_H2A_CS"/>
</dbReference>
<dbReference type="PANTHER" id="PTHR23430">
    <property type="entry name" value="HISTONE H2A"/>
    <property type="match status" value="1"/>
</dbReference>
<dbReference type="Pfam" id="PF00125">
    <property type="entry name" value="Histone"/>
    <property type="match status" value="1"/>
</dbReference>
<dbReference type="Pfam" id="PF16211">
    <property type="entry name" value="Histone_H2A_C"/>
    <property type="match status" value="1"/>
</dbReference>
<dbReference type="PRINTS" id="PR00620">
    <property type="entry name" value="HISTONEH2A"/>
</dbReference>
<dbReference type="SMART" id="SM00414">
    <property type="entry name" value="H2A"/>
    <property type="match status" value="1"/>
</dbReference>
<dbReference type="SUPFAM" id="SSF47113">
    <property type="entry name" value="Histone-fold"/>
    <property type="match status" value="1"/>
</dbReference>
<dbReference type="PROSITE" id="PS00046">
    <property type="entry name" value="HISTONE_H2A"/>
    <property type="match status" value="1"/>
</dbReference>
<sequence>MSGRGKQGGKARAKAKTRSSRAGLQFPVGRVHRLLRKGNYAERVGAGAPVYLAAVLEYLTAEILELAGNAARDNKKTRIIPRHLQLAIRNDEELNKLLGKVTIAQGGVLPNIQAVLLPKKTESHHKAKGK</sequence>
<evidence type="ECO:0000250" key="1">
    <source>
        <dbReference type="UniProtKB" id="C0HKE1"/>
    </source>
</evidence>
<evidence type="ECO:0000250" key="2">
    <source>
        <dbReference type="UniProtKB" id="P0C0S5"/>
    </source>
</evidence>
<evidence type="ECO:0000250" key="3">
    <source>
        <dbReference type="UniProtKB" id="P0C0S8"/>
    </source>
</evidence>
<evidence type="ECO:0000250" key="4">
    <source>
        <dbReference type="UniProtKB" id="P22752"/>
    </source>
</evidence>
<evidence type="ECO:0000256" key="5">
    <source>
        <dbReference type="SAM" id="MobiDB-lite"/>
    </source>
</evidence>
<evidence type="ECO:0000269" key="6">
    <source>
    </source>
</evidence>
<evidence type="ECO:0000269" key="7">
    <source>
    </source>
</evidence>
<evidence type="ECO:0000269" key="8">
    <source>
    </source>
</evidence>
<evidence type="ECO:0000269" key="9">
    <source>
    </source>
</evidence>
<evidence type="ECO:0000305" key="10"/>
<name>H2A1_BOVIN</name>
<organism>
    <name type="scientific">Bos taurus</name>
    <name type="common">Bovine</name>
    <dbReference type="NCBI Taxonomy" id="9913"/>
    <lineage>
        <taxon>Eukaryota</taxon>
        <taxon>Metazoa</taxon>
        <taxon>Chordata</taxon>
        <taxon>Craniata</taxon>
        <taxon>Vertebrata</taxon>
        <taxon>Euteleostomi</taxon>
        <taxon>Mammalia</taxon>
        <taxon>Eutheria</taxon>
        <taxon>Laurasiatheria</taxon>
        <taxon>Artiodactyla</taxon>
        <taxon>Ruminantia</taxon>
        <taxon>Pecora</taxon>
        <taxon>Bovidae</taxon>
        <taxon>Bovinae</taxon>
        <taxon>Bos</taxon>
    </lineage>
</organism>
<protein>
    <recommendedName>
        <fullName>Histone H2A type 1</fullName>
    </recommendedName>
    <alternativeName>
        <fullName>H2A.1b</fullName>
    </alternativeName>
</protein>
<feature type="initiator methionine" description="Removed" evidence="6 8 9">
    <location>
        <position position="1"/>
    </location>
</feature>
<feature type="chain" id="PRO_0000055241" description="Histone H2A type 1">
    <location>
        <begin position="2"/>
        <end position="130"/>
    </location>
</feature>
<feature type="region of interest" description="Disordered" evidence="5">
    <location>
        <begin position="1"/>
        <end position="22"/>
    </location>
</feature>
<feature type="compositionally biased region" description="Basic residues" evidence="5">
    <location>
        <begin position="7"/>
        <end position="19"/>
    </location>
</feature>
<feature type="modified residue" description="N-acetylserine" evidence="6 9">
    <location>
        <position position="2"/>
    </location>
</feature>
<feature type="modified residue" description="Phosphoserine; by RPS6KA5" evidence="3">
    <location>
        <position position="2"/>
    </location>
</feature>
<feature type="modified residue" description="Citrulline; alternate" evidence="3">
    <location>
        <position position="4"/>
    </location>
</feature>
<feature type="modified residue" description="Symmetric dimethylarginine; by PRMT5; alternate" evidence="4">
    <location>
        <position position="4"/>
    </location>
</feature>
<feature type="modified residue" description="N6-(2-hydroxyisobutyryl)lysine" evidence="3">
    <location>
        <position position="6"/>
    </location>
</feature>
<feature type="modified residue" description="N6-(2-hydroxyisobutyryl)lysine; alternate" evidence="3">
    <location>
        <position position="10"/>
    </location>
</feature>
<feature type="modified residue" description="N6-lactoyllysine; alternate" evidence="2">
    <location>
        <position position="10"/>
    </location>
</feature>
<feature type="modified residue" description="N6-succinyllysine; alternate" evidence="3">
    <location>
        <position position="10"/>
    </location>
</feature>
<feature type="modified residue" description="N6-(2-hydroxyisobutyryl)lysine; alternate" evidence="3">
    <location>
        <position position="37"/>
    </location>
</feature>
<feature type="modified residue" description="N6-(beta-hydroxybutyryl)lysine; alternate" evidence="1">
    <location>
        <position position="37"/>
    </location>
</feature>
<feature type="modified residue" description="N6-crotonyllysine; alternate" evidence="3">
    <location>
        <position position="37"/>
    </location>
</feature>
<feature type="modified residue" description="N6-(2-hydroxyisobutyryl)lysine" evidence="3">
    <location>
        <position position="75"/>
    </location>
</feature>
<feature type="modified residue" description="N6-(2-hydroxyisobutyryl)lysine" evidence="3">
    <location>
        <position position="76"/>
    </location>
</feature>
<feature type="modified residue" description="N6-(2-hydroxyisobutyryl)lysine; alternate" evidence="3">
    <location>
        <position position="96"/>
    </location>
</feature>
<feature type="modified residue" description="N6-glutaryllysine; alternate" evidence="3">
    <location>
        <position position="96"/>
    </location>
</feature>
<feature type="modified residue" description="N6-succinyllysine; alternate" evidence="3">
    <location>
        <position position="96"/>
    </location>
</feature>
<feature type="modified residue" description="N6-glutaryllysine" evidence="3">
    <location>
        <position position="100"/>
    </location>
</feature>
<feature type="modified residue" description="N5-methylglutamine" evidence="3">
    <location>
        <position position="105"/>
    </location>
</feature>
<feature type="modified residue" description="N6-(2-hydroxyisobutyryl)lysine; alternate" evidence="3">
    <location>
        <position position="119"/>
    </location>
</feature>
<feature type="modified residue" description="N6-crotonyllysine; alternate" evidence="3">
    <location>
        <position position="119"/>
    </location>
</feature>
<feature type="modified residue" description="N6-glutaryllysine; alternate" evidence="3">
    <location>
        <position position="119"/>
    </location>
</feature>
<feature type="modified residue" description="N6-crotonyllysine; alternate" evidence="3">
    <location>
        <position position="120"/>
    </location>
</feature>
<feature type="modified residue" description="N6-glutaryllysine; alternate" evidence="3">
    <location>
        <position position="120"/>
    </location>
</feature>
<feature type="modified residue" description="Phosphothreonine; by DCAF1" evidence="3">
    <location>
        <position position="121"/>
    </location>
</feature>
<feature type="modified residue" description="N6-crotonyllysine; alternate" evidence="3">
    <location>
        <position position="126"/>
    </location>
</feature>
<feature type="modified residue" description="N6-glutaryllysine; alternate" evidence="3">
    <location>
        <position position="126"/>
    </location>
</feature>
<feature type="cross-link" description="Glycyl lysine isopeptide (Lys-Gly) (interchain with G-Cter in ubiquitin)" evidence="3">
    <location>
        <position position="14"/>
    </location>
</feature>
<feature type="cross-link" description="Glycyl lysine isopeptide (Lys-Gly) (interchain with G-Cter in ubiquitin)" evidence="3">
    <location>
        <position position="16"/>
    </location>
</feature>
<feature type="cross-link" description="Glycyl lysine isopeptide (Lys-Gly) (interchain with G-Cter in ubiquitin); alternate" evidence="6">
    <location>
        <position position="120"/>
    </location>
</feature>
<reference key="1">
    <citation type="submission" date="2007-06" db="EMBL/GenBank/DDBJ databases">
        <authorList>
            <consortium name="NIH - Mammalian Gene Collection (MGC) project"/>
        </authorList>
    </citation>
    <scope>NUCLEOTIDE SEQUENCE [LARGE SCALE MRNA]</scope>
    <source>
        <strain>Hereford</strain>
        <tissue>Thymus</tissue>
    </source>
</reference>
<reference key="2">
    <citation type="journal article" date="1974" name="Eur. J. Biochem.">
        <title>Covalent structure of calf-thymus ALK-histone.</title>
        <authorList>
            <person name="Sautiere P."/>
            <person name="Tyrou D."/>
            <person name="Laine B."/>
            <person name="Mizon J."/>
            <person name="Ruffin P."/>
            <person name="Biserte G."/>
        </authorList>
    </citation>
    <scope>PROTEIN SEQUENCE OF 2-130</scope>
    <scope>ACETYLATION AT SER-2</scope>
    <source>
        <tissue>Thymus</tissue>
    </source>
</reference>
<reference key="3">
    <citation type="journal article" date="1972" name="Physiol. Chem. Phys.">
        <title>Homology of the amino terminal sequences of the AL and GAR calf thymus histones.</title>
        <authorList>
            <person name="Olson M.O.J."/>
            <person name="Sugano N."/>
            <person name="Yeoman L.C."/>
            <person name="Johnson B.R."/>
            <person name="Jordan J.J."/>
            <person name="Taylor C.W."/>
            <person name="Starbuck W.C."/>
            <person name="Busch H."/>
        </authorList>
    </citation>
    <scope>PROTEIN SEQUENCE OF 2-30</scope>
    <source>
        <tissue>Thymus</tissue>
    </source>
</reference>
<reference key="4">
    <citation type="journal article" date="1972" name="J. Biol. Chem.">
        <title>Amino acid sequence of the center of the arginine-lysine-rich histone from calf thymus. The total sequence.</title>
        <authorList>
            <person name="Yeoman L.C."/>
            <person name="Olson M.O.J."/>
            <person name="Sugano N."/>
            <person name="Jordan J.J."/>
            <person name="Taylor C.W."/>
            <person name="Starbuck W.C."/>
            <person name="Busch H."/>
        </authorList>
    </citation>
    <scope>PROTEIN SEQUENCE OF 31-82</scope>
    <source>
        <tissue>Thymus</tissue>
    </source>
</reference>
<reference key="5">
    <citation type="journal article" date="1972" name="J. Biol. Chem.">
        <title>Amino acid sequence of the COOH-terminal portion of the arginine-lysine-rich histone of calf thymus.</title>
        <authorList>
            <person name="Sugano N."/>
            <person name="Olson M.O.J."/>
            <person name="Yeoman L.C."/>
            <person name="Johnson B.R."/>
            <person name="Taylor C.W."/>
            <person name="Starbuck W.C."/>
            <person name="Busch H."/>
        </authorList>
    </citation>
    <scope>PROTEIN SEQUENCE OF 83-130</scope>
    <source>
        <tissue>Thymus</tissue>
    </source>
</reference>
<reference key="6">
    <citation type="journal article" date="1976" name="J. Biochem.">
        <title>Calf thymus histone H2A. Purification and tryptic peptides.</title>
        <authorList>
            <person name="Hayashi H."/>
            <person name="Iwai K."/>
        </authorList>
    </citation>
    <scope>PARTIAL PROTEIN SEQUENCE</scope>
</reference>
<reference key="7">
    <citation type="journal article" date="1991" name="Endocrinology">
        <title>Complete amino acid sequence analysis of a peptide isolated from the thymus that enhances release of growth hormone and prolactin.</title>
        <authorList>
            <person name="Badamchian M."/>
            <person name="Spangelo B.L."/>
            <person name="Damavandy T."/>
            <person name="McLeod R.M."/>
            <person name="Goldstein A.L."/>
        </authorList>
    </citation>
    <scope>PROTEIN SEQUENCE OF 87-121</scope>
</reference>
<reference key="8">
    <citation type="journal article" date="1977" name="Proc. Natl. Acad. Sci. U.S.A.">
        <title>Isopeptide linkage between nonhistone and histone 2A polypeptides of chromosomal conjugate-protein A24.</title>
        <authorList>
            <person name="Goldknopf I.L."/>
            <person name="Busch H."/>
        </authorList>
    </citation>
    <scope>PROTEIN SEQUENCE OF 124-130</scope>
    <scope>ACETYLATION AT SER-2</scope>
    <scope>UBIQUITINATION AT LYS-120</scope>
</reference>
<reference key="9">
    <citation type="journal article" date="1989" name="Biochemistry">
        <title>Ubiquitinated histone H2B is preferentially located in transcriptionally active chromatin.</title>
        <authorList>
            <person name="Nickel B.E."/>
            <person name="Allis C.D."/>
            <person name="Davie J.R."/>
        </authorList>
    </citation>
    <scope>UBIQUITINATION</scope>
</reference>
<keyword id="KW-0002">3D-structure</keyword>
<keyword id="KW-0007">Acetylation</keyword>
<keyword id="KW-0158">Chromosome</keyword>
<keyword id="KW-0164">Citrullination</keyword>
<keyword id="KW-0903">Direct protein sequencing</keyword>
<keyword id="KW-0238">DNA-binding</keyword>
<keyword id="KW-0379">Hydroxylation</keyword>
<keyword id="KW-1017">Isopeptide bond</keyword>
<keyword id="KW-0488">Methylation</keyword>
<keyword id="KW-0544">Nucleosome core</keyword>
<keyword id="KW-0539">Nucleus</keyword>
<keyword id="KW-0597">Phosphoprotein</keyword>
<keyword id="KW-1185">Reference proteome</keyword>
<keyword id="KW-0832">Ubl conjugation</keyword>
<comment type="function">
    <text>Core component of nucleosome. Nucleosomes wrap and compact DNA into chromatin, limiting DNA accessibility to the cellular machineries which require DNA as a template. Histones thereby play a central role in transcription regulation, DNA repair, DNA replication and chromosomal stability. DNA accessibility is regulated via a complex set of post-translational modifications of histones, also called histone code, and nucleosome remodeling.</text>
</comment>
<comment type="subunit">
    <text evidence="3">The nucleosome is a histone octamer containing two molecules each of H2A, H2B, H3 and H4 assembled in one H3-H4 heterotetramer and two H2A-H2B heterodimers. The octamer wraps approximately 147 bp of DNA. Interacts with VRK1; the interaction is mediated by the nucleosome acidic patch, a cluster of negatively charged residues of H2A and H2B forming a cleft within the nucleosome core (By similarity).</text>
</comment>
<comment type="subcellular location">
    <subcellularLocation>
        <location>Nucleus</location>
    </subcellularLocation>
    <subcellularLocation>
        <location>Chromosome</location>
    </subcellularLocation>
</comment>
<comment type="PTM">
    <text evidence="3">Deiminated on Arg-4 in granulocytes upon calcium entry.</text>
</comment>
<comment type="PTM">
    <text evidence="3 6 7">Monoubiquitination of Lys-120 (H2AK119Ub) by RING1, TRIM37 and RNF2/RING2 complex gives a specific tag for epigenetic transcriptional repression and participates in X chromosome inactivation of female mammals. It is involved in the initiation of both imprinted and random X inactivation. Ubiquitinated H2A is enriched in inactive X chromosome chromatin. Ubiquitination of H2A functions downstream of methylation of 'Lys-27' of histone H3 (H3K27me). H2AK119Ub by RNF2/RING2 can also be induced by ultraviolet and may be involved in DNA repair. Following DNA double-strand breaks (DSBs), it is ubiquitinated through 'Lys-63' linkage of ubiquitin moieties by the E2 ligase UBE2N and the E3 ligases RNF8 and RNF168, leading to the recruitment of repair proteins to sites of DNA damage. Ubiquitination at Lys-14 and Lys-16 (H2AK13Ub and H2AK15Ub, respectively) in response to DNA damage is initiated by RNF168 that mediates monoubiquitination at these 2 sites, and 'Lys-63'-linked ubiquitin are then conjugated to monoubiquitin; RNF8 is able to extend 'Lys-63'-linked ubiquitin chains in vitro. H2AK119Ub and ionizing radiation-induced 'Lys-63'-linked ubiquitination (H2AK13Ub and H2AK15Ub) are distinct events.</text>
</comment>
<comment type="PTM">
    <text evidence="3">Phosphorylation on Ser-2 (H2AS1ph) is enhanced during mitosis. Phosphorylation on Ser-2 by RPS6KA5/MSK1 directly represses transcription. Acetylation of H3 inhibits Ser-2 phosphorylation by RPS6KA5/MSK1. Phosphorylation at Thr-121 (H2AT120ph) by DCAF1 is present in the regulatory region of many tumor suppresor genes and down-regulates their transcription.</text>
</comment>
<comment type="PTM">
    <text evidence="4">Symmetric dimethylation on Arg-4 by the PRDM1/PRMT5 complex may play a crucial role in the germ-cell lineage.</text>
</comment>
<comment type="PTM">
    <text evidence="3">Glutamine methylation at Gln-105 (H2AQ104me) by FBL is specifically dedicated to polymerase I. It is present at 35S ribosomal DNA locus and impairs binding of the FACT complex.</text>
</comment>
<comment type="PTM">
    <text evidence="3">Crotonylation (Kcr) is specifically present in male germ cells and marks testis-specific genes in post-meiotic cells, including X-linked genes that escape sex chromosome inactivation in haploid cells. Crotonylation marks active promoters and enhancers and confers resistance to transcriptional repressors. It is also associated with post-meiotically activated genes on autosomes.</text>
</comment>
<comment type="PTM">
    <text evidence="2">Lactylated in macrophages by EP300/P300 by using lactoyl-CoA directly derived from endogenous or exogenous lactate, leading to stimulates gene transcription.</text>
</comment>
<comment type="miscellaneous">
    <text>Describes the first characterization of a ubiquitinated protein (PubMed:265581).</text>
</comment>
<comment type="similarity">
    <text evidence="10">Belongs to the histone H2A family.</text>
</comment>